<feature type="chain" id="PRO_1000127608" description="L-arabinose isomerase">
    <location>
        <begin position="1"/>
        <end position="501"/>
    </location>
</feature>
<feature type="binding site" evidence="1">
    <location>
        <position position="306"/>
    </location>
    <ligand>
        <name>Mn(2+)</name>
        <dbReference type="ChEBI" id="CHEBI:29035"/>
    </ligand>
</feature>
<feature type="binding site" evidence="1">
    <location>
        <position position="333"/>
    </location>
    <ligand>
        <name>Mn(2+)</name>
        <dbReference type="ChEBI" id="CHEBI:29035"/>
    </ligand>
</feature>
<feature type="binding site" evidence="1">
    <location>
        <position position="350"/>
    </location>
    <ligand>
        <name>Mn(2+)</name>
        <dbReference type="ChEBI" id="CHEBI:29035"/>
    </ligand>
</feature>
<feature type="binding site" evidence="1">
    <location>
        <position position="449"/>
    </location>
    <ligand>
        <name>Mn(2+)</name>
        <dbReference type="ChEBI" id="CHEBI:29035"/>
    </ligand>
</feature>
<gene>
    <name evidence="1" type="primary">araA</name>
    <name type="ordered locus">Haur_3664</name>
</gene>
<dbReference type="EC" id="5.3.1.4" evidence="1"/>
<dbReference type="EMBL" id="CP000875">
    <property type="protein sequence ID" value="ABX06300.1"/>
    <property type="molecule type" value="Genomic_DNA"/>
</dbReference>
<dbReference type="SMR" id="A9B689"/>
<dbReference type="FunCoup" id="A9B689">
    <property type="interactions" value="32"/>
</dbReference>
<dbReference type="STRING" id="316274.Haur_3664"/>
<dbReference type="KEGG" id="hau:Haur_3664"/>
<dbReference type="eggNOG" id="COG2160">
    <property type="taxonomic scope" value="Bacteria"/>
</dbReference>
<dbReference type="HOGENOM" id="CLU_045663_0_0_0"/>
<dbReference type="InParanoid" id="A9B689"/>
<dbReference type="UniPathway" id="UPA00145">
    <property type="reaction ID" value="UER00565"/>
</dbReference>
<dbReference type="Proteomes" id="UP000000787">
    <property type="component" value="Chromosome"/>
</dbReference>
<dbReference type="GO" id="GO:0005829">
    <property type="term" value="C:cytosol"/>
    <property type="evidence" value="ECO:0007669"/>
    <property type="project" value="TreeGrafter"/>
</dbReference>
<dbReference type="GO" id="GO:0008733">
    <property type="term" value="F:L-arabinose isomerase activity"/>
    <property type="evidence" value="ECO:0007669"/>
    <property type="project" value="UniProtKB-UniRule"/>
</dbReference>
<dbReference type="GO" id="GO:0030145">
    <property type="term" value="F:manganese ion binding"/>
    <property type="evidence" value="ECO:0007669"/>
    <property type="project" value="UniProtKB-UniRule"/>
</dbReference>
<dbReference type="GO" id="GO:0019569">
    <property type="term" value="P:L-arabinose catabolic process to xylulose 5-phosphate"/>
    <property type="evidence" value="ECO:0007669"/>
    <property type="project" value="UniProtKB-UniRule"/>
</dbReference>
<dbReference type="CDD" id="cd03557">
    <property type="entry name" value="L-arabinose_isomerase"/>
    <property type="match status" value="1"/>
</dbReference>
<dbReference type="Gene3D" id="3.40.50.10940">
    <property type="match status" value="1"/>
</dbReference>
<dbReference type="HAMAP" id="MF_00519">
    <property type="entry name" value="Arabinose_Isome"/>
    <property type="match status" value="1"/>
</dbReference>
<dbReference type="InterPro" id="IPR024664">
    <property type="entry name" value="Ara_Isoase_C"/>
</dbReference>
<dbReference type="InterPro" id="IPR055390">
    <property type="entry name" value="AraA_central"/>
</dbReference>
<dbReference type="InterPro" id="IPR055389">
    <property type="entry name" value="AraA_N"/>
</dbReference>
<dbReference type="InterPro" id="IPR038583">
    <property type="entry name" value="AraA_N_sf"/>
</dbReference>
<dbReference type="InterPro" id="IPR004216">
    <property type="entry name" value="Fuc/Ara_isomerase_C"/>
</dbReference>
<dbReference type="InterPro" id="IPR009015">
    <property type="entry name" value="Fucose_isomerase_N/cen_sf"/>
</dbReference>
<dbReference type="InterPro" id="IPR003762">
    <property type="entry name" value="Lara_isomerase"/>
</dbReference>
<dbReference type="NCBIfam" id="NF002795">
    <property type="entry name" value="PRK02929.1"/>
    <property type="match status" value="1"/>
</dbReference>
<dbReference type="PANTHER" id="PTHR38464">
    <property type="entry name" value="L-ARABINOSE ISOMERASE"/>
    <property type="match status" value="1"/>
</dbReference>
<dbReference type="PANTHER" id="PTHR38464:SF1">
    <property type="entry name" value="L-ARABINOSE ISOMERASE"/>
    <property type="match status" value="1"/>
</dbReference>
<dbReference type="Pfam" id="PF24856">
    <property type="entry name" value="AraA_central"/>
    <property type="match status" value="1"/>
</dbReference>
<dbReference type="Pfam" id="PF02610">
    <property type="entry name" value="AraA_N"/>
    <property type="match status" value="1"/>
</dbReference>
<dbReference type="Pfam" id="PF11762">
    <property type="entry name" value="Arabinose_Iso_C"/>
    <property type="match status" value="1"/>
</dbReference>
<dbReference type="PIRSF" id="PIRSF001478">
    <property type="entry name" value="L-ara_isomerase"/>
    <property type="match status" value="1"/>
</dbReference>
<dbReference type="SUPFAM" id="SSF50443">
    <property type="entry name" value="FucI/AraA C-terminal domain-like"/>
    <property type="match status" value="1"/>
</dbReference>
<dbReference type="SUPFAM" id="SSF53743">
    <property type="entry name" value="FucI/AraA N-terminal and middle domains"/>
    <property type="match status" value="1"/>
</dbReference>
<reference key="1">
    <citation type="journal article" date="2011" name="Stand. Genomic Sci.">
        <title>Complete genome sequence of the filamentous gliding predatory bacterium Herpetosiphon aurantiacus type strain (114-95(T)).</title>
        <authorList>
            <person name="Kiss H."/>
            <person name="Nett M."/>
            <person name="Domin N."/>
            <person name="Martin K."/>
            <person name="Maresca J.A."/>
            <person name="Copeland A."/>
            <person name="Lapidus A."/>
            <person name="Lucas S."/>
            <person name="Berry K.W."/>
            <person name="Glavina Del Rio T."/>
            <person name="Dalin E."/>
            <person name="Tice H."/>
            <person name="Pitluck S."/>
            <person name="Richardson P."/>
            <person name="Bruce D."/>
            <person name="Goodwin L."/>
            <person name="Han C."/>
            <person name="Detter J.C."/>
            <person name="Schmutz J."/>
            <person name="Brettin T."/>
            <person name="Land M."/>
            <person name="Hauser L."/>
            <person name="Kyrpides N.C."/>
            <person name="Ivanova N."/>
            <person name="Goeker M."/>
            <person name="Woyke T."/>
            <person name="Klenk H.P."/>
            <person name="Bryant D.A."/>
        </authorList>
    </citation>
    <scope>NUCLEOTIDE SEQUENCE [LARGE SCALE GENOMIC DNA]</scope>
    <source>
        <strain>ATCC 23779 / DSM 785 / 114-95</strain>
    </source>
</reference>
<proteinExistence type="inferred from homology"/>
<protein>
    <recommendedName>
        <fullName evidence="1">L-arabinose isomerase</fullName>
        <ecNumber evidence="1">5.3.1.4</ecNumber>
    </recommendedName>
</protein>
<evidence type="ECO:0000255" key="1">
    <source>
        <dbReference type="HAMAP-Rule" id="MF_00519"/>
    </source>
</evidence>
<accession>A9B689</accession>
<name>ARAA_HERA2</name>
<comment type="function">
    <text evidence="1">Catalyzes the conversion of L-arabinose to L-ribulose.</text>
</comment>
<comment type="catalytic activity">
    <reaction evidence="1">
        <text>beta-L-arabinopyranose = L-ribulose</text>
        <dbReference type="Rhea" id="RHEA:14821"/>
        <dbReference type="ChEBI" id="CHEBI:16880"/>
        <dbReference type="ChEBI" id="CHEBI:40886"/>
        <dbReference type="EC" id="5.3.1.4"/>
    </reaction>
</comment>
<comment type="cofactor">
    <cofactor evidence="1">
        <name>Mn(2+)</name>
        <dbReference type="ChEBI" id="CHEBI:29035"/>
    </cofactor>
    <text evidence="1">Binds 1 Mn(2+) ion per subunit.</text>
</comment>
<comment type="pathway">
    <text evidence="1">Carbohydrate degradation; L-arabinose degradation via L-ribulose; D-xylulose 5-phosphate from L-arabinose (bacterial route): step 1/3.</text>
</comment>
<comment type="similarity">
    <text evidence="1">Belongs to the arabinose isomerase family.</text>
</comment>
<sequence length="501" mass="55678">MLDLKQYEVWFITGSQHLYGPETLEQVAKHSQIIAAGLDQSSTIPVRVVFKPVLKTPDEIYNLVLEANAAKNCIGLVAWMHTFSPAKMWIAGLRSLQKPLAHLHTQFNSEIPWSEIDMDFMNLNQAAHGDREFGFIVSRMRLERKVIVGHWQDSEVHDRIAAWTRAAAAWHDAQGARFARFGDNMREVAVTEGDKVNAQMRLGYSVSGYGVGDLVRFVNEVSDADIDSTLQEYAEQYELAAGLQAGGEQHHSLREAARIELGLRYFLEHGNFKGFTTTFEDLHGLVQLPGLGPQRLMDRGYGFAGEGDWKTAALVRAMKVMSAGLNGGTSFMEDYTYHFGSNGMKVLGAHMLEICPSIAATKPRLEVHPLGIGGKADPVRMVFDAKTGPAVNASIVEMGNRLRLINSVVDAVETDQPLPKLPVARALWLPQPDLKTAAAAWIYAGGAHHTGFSFDLTSEHLADFAEIAGMEYLQIDRNTNVQQFKQELRWNDLYYHLAKGL</sequence>
<keyword id="KW-0054">Arabinose catabolism</keyword>
<keyword id="KW-0119">Carbohydrate metabolism</keyword>
<keyword id="KW-0413">Isomerase</keyword>
<keyword id="KW-0464">Manganese</keyword>
<keyword id="KW-0479">Metal-binding</keyword>
<organism>
    <name type="scientific">Herpetosiphon aurantiacus (strain ATCC 23779 / DSM 785 / 114-95)</name>
    <dbReference type="NCBI Taxonomy" id="316274"/>
    <lineage>
        <taxon>Bacteria</taxon>
        <taxon>Bacillati</taxon>
        <taxon>Chloroflexota</taxon>
        <taxon>Chloroflexia</taxon>
        <taxon>Herpetosiphonales</taxon>
        <taxon>Herpetosiphonaceae</taxon>
        <taxon>Herpetosiphon</taxon>
    </lineage>
</organism>